<keyword id="KW-0028">Amino-acid biosynthesis</keyword>
<keyword id="KW-0067">ATP-binding</keyword>
<keyword id="KW-0963">Cytoplasm</keyword>
<keyword id="KW-0328">Glycosyltransferase</keyword>
<keyword id="KW-0368">Histidine biosynthesis</keyword>
<keyword id="KW-0460">Magnesium</keyword>
<keyword id="KW-0479">Metal-binding</keyword>
<keyword id="KW-0547">Nucleotide-binding</keyword>
<keyword id="KW-0808">Transferase</keyword>
<accession>B0BU47</accession>
<comment type="function">
    <text evidence="1">Catalyzes the condensation of ATP and 5-phosphoribose 1-diphosphate to form N'-(5'-phosphoribosyl)-ATP (PR-ATP). Has a crucial role in the pathway because the rate of histidine biosynthesis seems to be controlled primarily by regulation of HisG enzymatic activity.</text>
</comment>
<comment type="catalytic activity">
    <reaction evidence="1">
        <text>1-(5-phospho-beta-D-ribosyl)-ATP + diphosphate = 5-phospho-alpha-D-ribose 1-diphosphate + ATP</text>
        <dbReference type="Rhea" id="RHEA:18473"/>
        <dbReference type="ChEBI" id="CHEBI:30616"/>
        <dbReference type="ChEBI" id="CHEBI:33019"/>
        <dbReference type="ChEBI" id="CHEBI:58017"/>
        <dbReference type="ChEBI" id="CHEBI:73183"/>
        <dbReference type="EC" id="2.4.2.17"/>
    </reaction>
</comment>
<comment type="cofactor">
    <cofactor evidence="1">
        <name>Mg(2+)</name>
        <dbReference type="ChEBI" id="CHEBI:18420"/>
    </cofactor>
</comment>
<comment type="activity regulation">
    <text evidence="1">Feedback inhibited by histidine.</text>
</comment>
<comment type="pathway">
    <text evidence="1">Amino-acid biosynthesis; L-histidine biosynthesis; L-histidine from 5-phospho-alpha-D-ribose 1-diphosphate: step 1/9.</text>
</comment>
<comment type="subcellular location">
    <subcellularLocation>
        <location evidence="1">Cytoplasm</location>
    </subcellularLocation>
</comment>
<comment type="similarity">
    <text evidence="1">Belongs to the ATP phosphoribosyltransferase family. Long subfamily.</text>
</comment>
<proteinExistence type="inferred from homology"/>
<dbReference type="EC" id="2.4.2.17" evidence="1"/>
<dbReference type="EMBL" id="CP000687">
    <property type="protein sequence ID" value="ABY70614.1"/>
    <property type="molecule type" value="Genomic_DNA"/>
</dbReference>
<dbReference type="RefSeq" id="WP_005606152.1">
    <property type="nucleotide sequence ID" value="NC_010278.1"/>
</dbReference>
<dbReference type="SMR" id="B0BU47"/>
<dbReference type="KEGG" id="apj:APJL_2069"/>
<dbReference type="HOGENOM" id="CLU_038115_1_0_6"/>
<dbReference type="UniPathway" id="UPA00031">
    <property type="reaction ID" value="UER00006"/>
</dbReference>
<dbReference type="Proteomes" id="UP000008547">
    <property type="component" value="Chromosome"/>
</dbReference>
<dbReference type="GO" id="GO:0005737">
    <property type="term" value="C:cytoplasm"/>
    <property type="evidence" value="ECO:0007669"/>
    <property type="project" value="UniProtKB-SubCell"/>
</dbReference>
<dbReference type="GO" id="GO:0005524">
    <property type="term" value="F:ATP binding"/>
    <property type="evidence" value="ECO:0007669"/>
    <property type="project" value="UniProtKB-KW"/>
</dbReference>
<dbReference type="GO" id="GO:0003879">
    <property type="term" value="F:ATP phosphoribosyltransferase activity"/>
    <property type="evidence" value="ECO:0007669"/>
    <property type="project" value="UniProtKB-UniRule"/>
</dbReference>
<dbReference type="GO" id="GO:0000287">
    <property type="term" value="F:magnesium ion binding"/>
    <property type="evidence" value="ECO:0007669"/>
    <property type="project" value="UniProtKB-UniRule"/>
</dbReference>
<dbReference type="GO" id="GO:0000105">
    <property type="term" value="P:L-histidine biosynthetic process"/>
    <property type="evidence" value="ECO:0007669"/>
    <property type="project" value="UniProtKB-UniRule"/>
</dbReference>
<dbReference type="CDD" id="cd13592">
    <property type="entry name" value="PBP2_HisGL2"/>
    <property type="match status" value="1"/>
</dbReference>
<dbReference type="FunFam" id="3.30.70.120:FF:000002">
    <property type="entry name" value="ATP phosphoribosyltransferase"/>
    <property type="match status" value="1"/>
</dbReference>
<dbReference type="FunFam" id="3.40.190.10:FF:000008">
    <property type="entry name" value="ATP phosphoribosyltransferase"/>
    <property type="match status" value="1"/>
</dbReference>
<dbReference type="Gene3D" id="3.30.70.120">
    <property type="match status" value="1"/>
</dbReference>
<dbReference type="Gene3D" id="3.40.190.10">
    <property type="entry name" value="Periplasmic binding protein-like II"/>
    <property type="match status" value="2"/>
</dbReference>
<dbReference type="HAMAP" id="MF_00079">
    <property type="entry name" value="HisG_Long"/>
    <property type="match status" value="1"/>
</dbReference>
<dbReference type="InterPro" id="IPR020621">
    <property type="entry name" value="ATP-PRT_HisG_long"/>
</dbReference>
<dbReference type="InterPro" id="IPR013820">
    <property type="entry name" value="ATP_PRibTrfase_cat"/>
</dbReference>
<dbReference type="InterPro" id="IPR018198">
    <property type="entry name" value="ATP_PRibTrfase_CS"/>
</dbReference>
<dbReference type="InterPro" id="IPR001348">
    <property type="entry name" value="ATP_PRibTrfase_HisG"/>
</dbReference>
<dbReference type="InterPro" id="IPR013115">
    <property type="entry name" value="HisG_C"/>
</dbReference>
<dbReference type="InterPro" id="IPR011322">
    <property type="entry name" value="N-reg_PII-like_a/b"/>
</dbReference>
<dbReference type="InterPro" id="IPR015867">
    <property type="entry name" value="N-reg_PII/ATP_PRibTrfase_C"/>
</dbReference>
<dbReference type="NCBIfam" id="TIGR00070">
    <property type="entry name" value="hisG"/>
    <property type="match status" value="1"/>
</dbReference>
<dbReference type="NCBIfam" id="TIGR03455">
    <property type="entry name" value="HisG_C-term"/>
    <property type="match status" value="1"/>
</dbReference>
<dbReference type="PANTHER" id="PTHR21403:SF8">
    <property type="entry name" value="ATP PHOSPHORIBOSYLTRANSFERASE"/>
    <property type="match status" value="1"/>
</dbReference>
<dbReference type="PANTHER" id="PTHR21403">
    <property type="entry name" value="ATP PHOSPHORIBOSYLTRANSFERASE ATP-PRTASE"/>
    <property type="match status" value="1"/>
</dbReference>
<dbReference type="Pfam" id="PF01634">
    <property type="entry name" value="HisG"/>
    <property type="match status" value="1"/>
</dbReference>
<dbReference type="Pfam" id="PF08029">
    <property type="entry name" value="HisG_C"/>
    <property type="match status" value="1"/>
</dbReference>
<dbReference type="SUPFAM" id="SSF54913">
    <property type="entry name" value="GlnB-like"/>
    <property type="match status" value="1"/>
</dbReference>
<dbReference type="SUPFAM" id="SSF53850">
    <property type="entry name" value="Periplasmic binding protein-like II"/>
    <property type="match status" value="1"/>
</dbReference>
<dbReference type="PROSITE" id="PS01316">
    <property type="entry name" value="ATP_P_PHORIBOSYLTR"/>
    <property type="match status" value="1"/>
</dbReference>
<name>HIS1_ACTPJ</name>
<organism>
    <name type="scientific">Actinobacillus pleuropneumoniae serotype 3 (strain JL03)</name>
    <dbReference type="NCBI Taxonomy" id="434271"/>
    <lineage>
        <taxon>Bacteria</taxon>
        <taxon>Pseudomonadati</taxon>
        <taxon>Pseudomonadota</taxon>
        <taxon>Gammaproteobacteria</taxon>
        <taxon>Pasteurellales</taxon>
        <taxon>Pasteurellaceae</taxon>
        <taxon>Actinobacillus</taxon>
    </lineage>
</organism>
<reference key="1">
    <citation type="journal article" date="2008" name="PLoS ONE">
        <title>Genome biology of Actinobacillus pleuropneumoniae JL03, an isolate of serotype 3 prevalent in China.</title>
        <authorList>
            <person name="Xu Z."/>
            <person name="Zhou Y."/>
            <person name="Li L."/>
            <person name="Zhou R."/>
            <person name="Xiao S."/>
            <person name="Wan Y."/>
            <person name="Zhang S."/>
            <person name="Wang K."/>
            <person name="Li W."/>
            <person name="Li L."/>
            <person name="Jin H."/>
            <person name="Kang M."/>
            <person name="Dalai B."/>
            <person name="Li T."/>
            <person name="Liu L."/>
            <person name="Cheng Y."/>
            <person name="Zhang L."/>
            <person name="Xu T."/>
            <person name="Zheng H."/>
            <person name="Pu S."/>
            <person name="Wang B."/>
            <person name="Gu W."/>
            <person name="Zhang X.L."/>
            <person name="Zhu G.-F."/>
            <person name="Wang S."/>
            <person name="Zhao G.-P."/>
            <person name="Chen H."/>
        </authorList>
    </citation>
    <scope>NUCLEOTIDE SEQUENCE [LARGE SCALE GENOMIC DNA]</scope>
    <source>
        <strain>JL03</strain>
    </source>
</reference>
<gene>
    <name evidence="1" type="primary">hisG</name>
    <name type="ordered locus">APJL_2069</name>
</gene>
<feature type="chain" id="PRO_1000092724" description="ATP phosphoribosyltransferase">
    <location>
        <begin position="1"/>
        <end position="299"/>
    </location>
</feature>
<protein>
    <recommendedName>
        <fullName evidence="1">ATP phosphoribosyltransferase</fullName>
        <shortName evidence="1">ATP-PRT</shortName>
        <shortName evidence="1">ATP-PRTase</shortName>
        <ecNumber evidence="1">2.4.2.17</ecNumber>
    </recommendedName>
</protein>
<sequence length="299" mass="33226">MTTTNRLRIALQKKGRLSKDCNELLKQCGVKINWNEQRLIAYAENMPIEILRVRDDDIPGLVFEGVVDLGIIGENVLEEEELGRLARGEKIEYKKLRTLDFGGCRLSLAIDRDRTYNGVQDFVNSRIATSYPNLLKRYMNEKGVAFKSTLLNGSVEVAPSAGLADAICDLVSSGATLEANGLKEVEVIYQSKACLIQRAEPLSTEKQALVDRLLTRIQGVQQAAESKYIMLHAPKDKLKEITALLPGVENPTILPLANDSARVAMHVVSQENLFWETMEQLKEMGASSVLVLPIEKMLA</sequence>
<evidence type="ECO:0000255" key="1">
    <source>
        <dbReference type="HAMAP-Rule" id="MF_00079"/>
    </source>
</evidence>